<protein>
    <recommendedName>
        <fullName>Palmitoyltransferase ZDHHC15</fullName>
        <ecNumber evidence="1">2.3.1.225</ecNumber>
    </recommendedName>
    <alternativeName>
        <fullName evidence="3">Acyltransferase ZDHHC15</fullName>
        <ecNumber evidence="3">2.3.1.-</ecNumber>
    </alternativeName>
    <alternativeName>
        <fullName>Zinc finger DHHC domain-containing protein 15 homolog</fullName>
        <shortName>DHHC-15</shortName>
    </alternativeName>
</protein>
<keyword id="KW-0012">Acyltransferase</keyword>
<keyword id="KW-0333">Golgi apparatus</keyword>
<keyword id="KW-0449">Lipoprotein</keyword>
<keyword id="KW-0472">Membrane</keyword>
<keyword id="KW-0479">Metal-binding</keyword>
<keyword id="KW-0564">Palmitate</keyword>
<keyword id="KW-1185">Reference proteome</keyword>
<keyword id="KW-0770">Synapse</keyword>
<keyword id="KW-0808">Transferase</keyword>
<keyword id="KW-0812">Transmembrane</keyword>
<keyword id="KW-1133">Transmembrane helix</keyword>
<keyword id="KW-0862">Zinc</keyword>
<gene>
    <name type="primary">zdhhc15</name>
</gene>
<sequence length="338" mass="39440">MLAGCRVALPRGLRCCQRVLSWVPVVIISLVVLWSYYAYVWELCLVTVTNPAEKAAYLLIFHTVFLLFIWTYWKAIFTPPKQPTKKFLLPYAEKERYDNEERPEAQKQIVAEFARKLPVYTRTGSGATRFCDTCQMVKPDRCHHCSVCGMCVLKMDHHCPWVNNCIGYSNYKFFLLFLAYAMLYCLYIGCTVFQYFILYWTDTLSNGRAKFHVLFLLFVALMFFISLMFLFGYHCWLVSLNRTTLEAFSTPVFQSGPDKNGFHLGIRRNLEQVFGKERKLWLIPVFTSLGDGFTYPMRMACESRNPLLAAENQWEDDLTDEESQAYCETSHITVHIEK</sequence>
<name>ZDH15_XENLA</name>
<feature type="chain" id="PRO_0000212895" description="Palmitoyltransferase ZDHHC15">
    <location>
        <begin position="1"/>
        <end position="338"/>
    </location>
</feature>
<feature type="topological domain" description="Cytoplasmic" evidence="1">
    <location>
        <begin position="1"/>
        <end position="20"/>
    </location>
</feature>
<feature type="transmembrane region" description="Helical" evidence="1">
    <location>
        <begin position="21"/>
        <end position="41"/>
    </location>
</feature>
<feature type="topological domain" description="Lumenal" evidence="1">
    <location>
        <begin position="42"/>
        <end position="56"/>
    </location>
</feature>
<feature type="transmembrane region" description="Helical" evidence="1">
    <location>
        <begin position="57"/>
        <end position="77"/>
    </location>
</feature>
<feature type="topological domain" description="Cytoplasmic" evidence="1">
    <location>
        <begin position="78"/>
        <end position="172"/>
    </location>
</feature>
<feature type="transmembrane region" description="Helical" evidence="1">
    <location>
        <begin position="173"/>
        <end position="193"/>
    </location>
</feature>
<feature type="topological domain" description="Lumenal" evidence="1">
    <location>
        <begin position="194"/>
        <end position="210"/>
    </location>
</feature>
<feature type="transmembrane region" description="Helical" evidence="1">
    <location>
        <begin position="211"/>
        <end position="234"/>
    </location>
</feature>
<feature type="topological domain" description="Cytoplasmic" evidence="1">
    <location>
        <begin position="235"/>
        <end position="338"/>
    </location>
</feature>
<feature type="domain" description="DHHC" evidence="5">
    <location>
        <begin position="129"/>
        <end position="179"/>
    </location>
</feature>
<feature type="active site" description="S-palmitoyl cysteine intermediate" evidence="5">
    <location>
        <position position="159"/>
    </location>
</feature>
<feature type="binding site" evidence="1">
    <location>
        <position position="131"/>
    </location>
    <ligand>
        <name>Zn(2+)</name>
        <dbReference type="ChEBI" id="CHEBI:29105"/>
        <label>1</label>
    </ligand>
</feature>
<feature type="binding site" evidence="1">
    <location>
        <position position="134"/>
    </location>
    <ligand>
        <name>Zn(2+)</name>
        <dbReference type="ChEBI" id="CHEBI:29105"/>
        <label>1</label>
    </ligand>
</feature>
<feature type="binding site" evidence="1">
    <location>
        <position position="144"/>
    </location>
    <ligand>
        <name>Zn(2+)</name>
        <dbReference type="ChEBI" id="CHEBI:29105"/>
        <label>1</label>
    </ligand>
</feature>
<feature type="binding site" evidence="1">
    <location>
        <position position="145"/>
    </location>
    <ligand>
        <name>Zn(2+)</name>
        <dbReference type="ChEBI" id="CHEBI:29105"/>
        <label>2</label>
    </ligand>
</feature>
<feature type="binding site" evidence="1">
    <location>
        <position position="148"/>
    </location>
    <ligand>
        <name>Zn(2+)</name>
        <dbReference type="ChEBI" id="CHEBI:29105"/>
        <label>2</label>
    </ligand>
</feature>
<feature type="binding site" evidence="1">
    <location>
        <position position="151"/>
    </location>
    <ligand>
        <name>Zn(2+)</name>
        <dbReference type="ChEBI" id="CHEBI:29105"/>
        <label>1</label>
    </ligand>
</feature>
<feature type="binding site" evidence="1">
    <location>
        <position position="158"/>
    </location>
    <ligand>
        <name>Zn(2+)</name>
        <dbReference type="ChEBI" id="CHEBI:29105"/>
        <label>2</label>
    </ligand>
</feature>
<feature type="binding site" evidence="1">
    <location>
        <position position="165"/>
    </location>
    <ligand>
        <name>Zn(2+)</name>
        <dbReference type="ChEBI" id="CHEBI:29105"/>
        <label>2</label>
    </ligand>
</feature>
<accession>Q5FWL7</accession>
<reference key="1">
    <citation type="submission" date="2005-01" db="EMBL/GenBank/DDBJ databases">
        <authorList>
            <consortium name="NIH - Xenopus Gene Collection (XGC) project"/>
        </authorList>
    </citation>
    <scope>NUCLEOTIDE SEQUENCE [LARGE SCALE MRNA]</scope>
    <source>
        <tissue>Egg</tissue>
    </source>
</reference>
<dbReference type="EC" id="2.3.1.225" evidence="1"/>
<dbReference type="EC" id="2.3.1.-" evidence="3"/>
<dbReference type="EMBL" id="BC089290">
    <property type="protein sequence ID" value="AAH89290.1"/>
    <property type="molecule type" value="mRNA"/>
</dbReference>
<dbReference type="RefSeq" id="NP_001089258.1">
    <property type="nucleotide sequence ID" value="NM_001095789.1"/>
</dbReference>
<dbReference type="SMR" id="Q5FWL7"/>
<dbReference type="DNASU" id="734305"/>
<dbReference type="GeneID" id="734305"/>
<dbReference type="KEGG" id="xla:734305"/>
<dbReference type="AGR" id="Xenbase:XB-GENE-948860"/>
<dbReference type="CTD" id="734305"/>
<dbReference type="Xenbase" id="XB-GENE-948860">
    <property type="gene designation" value="zdhhc15.L"/>
</dbReference>
<dbReference type="OrthoDB" id="9909019at2759"/>
<dbReference type="Proteomes" id="UP000186698">
    <property type="component" value="Chromosome 8L"/>
</dbReference>
<dbReference type="Bgee" id="734305">
    <property type="expression patterns" value="Expressed in blastula and 18 other cell types or tissues"/>
</dbReference>
<dbReference type="GO" id="GO:0005783">
    <property type="term" value="C:endoplasmic reticulum"/>
    <property type="evidence" value="ECO:0000318"/>
    <property type="project" value="GO_Central"/>
</dbReference>
<dbReference type="GO" id="GO:0005794">
    <property type="term" value="C:Golgi apparatus"/>
    <property type="evidence" value="ECO:0000318"/>
    <property type="project" value="GO_Central"/>
</dbReference>
<dbReference type="GO" id="GO:0000139">
    <property type="term" value="C:Golgi membrane"/>
    <property type="evidence" value="ECO:0000250"/>
    <property type="project" value="UniProtKB"/>
</dbReference>
<dbReference type="GO" id="GO:0014069">
    <property type="term" value="C:postsynaptic density"/>
    <property type="evidence" value="ECO:0007669"/>
    <property type="project" value="UniProtKB-SubCell"/>
</dbReference>
<dbReference type="GO" id="GO:0019705">
    <property type="term" value="F:protein-cysteine S-myristoyltransferase activity"/>
    <property type="evidence" value="ECO:0007669"/>
    <property type="project" value="RHEA"/>
</dbReference>
<dbReference type="GO" id="GO:0019706">
    <property type="term" value="F:protein-cysteine S-palmitoyltransferase activity"/>
    <property type="evidence" value="ECO:0000250"/>
    <property type="project" value="UniProtKB"/>
</dbReference>
<dbReference type="GO" id="GO:0140439">
    <property type="term" value="F:protein-cysteine S-stearoyltransferase activity"/>
    <property type="evidence" value="ECO:0007669"/>
    <property type="project" value="RHEA"/>
</dbReference>
<dbReference type="GO" id="GO:0008270">
    <property type="term" value="F:zinc ion binding"/>
    <property type="evidence" value="ECO:0000250"/>
    <property type="project" value="UniProtKB"/>
</dbReference>
<dbReference type="GO" id="GO:0018230">
    <property type="term" value="P:peptidyl-L-cysteine S-palmitoylation"/>
    <property type="evidence" value="ECO:0000250"/>
    <property type="project" value="UniProtKB"/>
</dbReference>
<dbReference type="GO" id="GO:0072657">
    <property type="term" value="P:protein localization to membrane"/>
    <property type="evidence" value="ECO:0000250"/>
    <property type="project" value="UniProtKB"/>
</dbReference>
<dbReference type="GO" id="GO:0140450">
    <property type="term" value="P:protein targeting to Golgi apparatus"/>
    <property type="evidence" value="ECO:0000250"/>
    <property type="project" value="UniProtKB"/>
</dbReference>
<dbReference type="GO" id="GO:0006612">
    <property type="term" value="P:protein targeting to membrane"/>
    <property type="evidence" value="ECO:0000318"/>
    <property type="project" value="GO_Central"/>
</dbReference>
<dbReference type="GO" id="GO:0016188">
    <property type="term" value="P:synaptic vesicle maturation"/>
    <property type="evidence" value="ECO:0000318"/>
    <property type="project" value="GO_Central"/>
</dbReference>
<dbReference type="InterPro" id="IPR001594">
    <property type="entry name" value="Palmitoyltrfase_DHHC"/>
</dbReference>
<dbReference type="InterPro" id="IPR039859">
    <property type="entry name" value="PFA4/ZDH16/20/ERF2-like"/>
</dbReference>
<dbReference type="PANTHER" id="PTHR12246">
    <property type="entry name" value="PALMITOYLTRANSFERASE ZDHHC16"/>
    <property type="match status" value="1"/>
</dbReference>
<dbReference type="Pfam" id="PF01529">
    <property type="entry name" value="DHHC"/>
    <property type="match status" value="1"/>
</dbReference>
<dbReference type="PROSITE" id="PS50216">
    <property type="entry name" value="DHHC"/>
    <property type="match status" value="1"/>
</dbReference>
<comment type="function">
    <text evidence="1 3 4">Palmitoyltransferase that catalyzes the addition of palmitate onto various protein substrates (By similarity). Has no stringent fatty acid selectivity and in addition to palmitate can also transfer onto target proteins myristate from tetradecanoyl-CoA and stearate from octadecanoyl-CoA (By similarity). May thereby regulate target proteins association and localization to membranes (By similarity). In the nervous system, probably catalyzes the palmitoylation of synaptic proteins and is involved in the differentiation of dopaminergic neurons and the development of the diencephalon (By similarity).</text>
</comment>
<comment type="catalytic activity">
    <reaction evidence="1">
        <text>L-cysteinyl-[protein] + hexadecanoyl-CoA = S-hexadecanoyl-L-cysteinyl-[protein] + CoA</text>
        <dbReference type="Rhea" id="RHEA:36683"/>
        <dbReference type="Rhea" id="RHEA-COMP:10131"/>
        <dbReference type="Rhea" id="RHEA-COMP:11032"/>
        <dbReference type="ChEBI" id="CHEBI:29950"/>
        <dbReference type="ChEBI" id="CHEBI:57287"/>
        <dbReference type="ChEBI" id="CHEBI:57379"/>
        <dbReference type="ChEBI" id="CHEBI:74151"/>
        <dbReference type="EC" id="2.3.1.225"/>
    </reaction>
</comment>
<comment type="catalytic activity">
    <reaction evidence="3">
        <text>L-cysteinyl-[protein] + tetradecanoyl-CoA = S-tetradecanoyl-L-cysteinyl-[protein] + CoA</text>
        <dbReference type="Rhea" id="RHEA:59736"/>
        <dbReference type="Rhea" id="RHEA-COMP:10131"/>
        <dbReference type="Rhea" id="RHEA-COMP:15433"/>
        <dbReference type="ChEBI" id="CHEBI:29950"/>
        <dbReference type="ChEBI" id="CHEBI:57287"/>
        <dbReference type="ChEBI" id="CHEBI:57385"/>
        <dbReference type="ChEBI" id="CHEBI:143199"/>
    </reaction>
    <physiologicalReaction direction="left-to-right" evidence="3">
        <dbReference type="Rhea" id="RHEA:59737"/>
    </physiologicalReaction>
</comment>
<comment type="catalytic activity">
    <reaction evidence="3">
        <text>L-cysteinyl-[protein] + octadecanoyl-CoA = S-octadecanoyl-L-cysteinyl-[protein] + CoA</text>
        <dbReference type="Rhea" id="RHEA:59740"/>
        <dbReference type="Rhea" id="RHEA-COMP:10131"/>
        <dbReference type="Rhea" id="RHEA-COMP:15434"/>
        <dbReference type="ChEBI" id="CHEBI:29950"/>
        <dbReference type="ChEBI" id="CHEBI:57287"/>
        <dbReference type="ChEBI" id="CHEBI:57394"/>
        <dbReference type="ChEBI" id="CHEBI:143200"/>
    </reaction>
    <physiologicalReaction direction="left-to-right" evidence="3">
        <dbReference type="Rhea" id="RHEA:59741"/>
    </physiologicalReaction>
</comment>
<comment type="subcellular location">
    <subcellularLocation>
        <location evidence="1">Golgi apparatus membrane</location>
        <topology evidence="1">Multi-pass membrane protein</topology>
    </subcellularLocation>
    <subcellularLocation>
        <location evidence="2">Postsynaptic density</location>
    </subcellularLocation>
</comment>
<comment type="domain">
    <text evidence="3">The DHHC domain is required for palmitoyltransferase activity.</text>
</comment>
<comment type="PTM">
    <text evidence="1">Autopalmitoylated (in vitro).</text>
</comment>
<comment type="similarity">
    <text evidence="6">Belongs to the DHHC palmitoyltransferase family.</text>
</comment>
<organism>
    <name type="scientific">Xenopus laevis</name>
    <name type="common">African clawed frog</name>
    <dbReference type="NCBI Taxonomy" id="8355"/>
    <lineage>
        <taxon>Eukaryota</taxon>
        <taxon>Metazoa</taxon>
        <taxon>Chordata</taxon>
        <taxon>Craniata</taxon>
        <taxon>Vertebrata</taxon>
        <taxon>Euteleostomi</taxon>
        <taxon>Amphibia</taxon>
        <taxon>Batrachia</taxon>
        <taxon>Anura</taxon>
        <taxon>Pipoidea</taxon>
        <taxon>Pipidae</taxon>
        <taxon>Xenopodinae</taxon>
        <taxon>Xenopus</taxon>
        <taxon>Xenopus</taxon>
    </lineage>
</organism>
<evidence type="ECO:0000250" key="1">
    <source>
        <dbReference type="UniProtKB" id="F1QXD3"/>
    </source>
</evidence>
<evidence type="ECO:0000250" key="2">
    <source>
        <dbReference type="UniProtKB" id="Q2TGJ4"/>
    </source>
</evidence>
<evidence type="ECO:0000250" key="3">
    <source>
        <dbReference type="UniProtKB" id="Q8BGJ0"/>
    </source>
</evidence>
<evidence type="ECO:0000250" key="4">
    <source>
        <dbReference type="UniProtKB" id="Q96MV8"/>
    </source>
</evidence>
<evidence type="ECO:0000255" key="5">
    <source>
        <dbReference type="PROSITE-ProRule" id="PRU00067"/>
    </source>
</evidence>
<evidence type="ECO:0000305" key="6"/>
<proteinExistence type="evidence at transcript level"/>